<organism>
    <name type="scientific">Canis lupus familiaris</name>
    <name type="common">Dog</name>
    <name type="synonym">Canis familiaris</name>
    <dbReference type="NCBI Taxonomy" id="9615"/>
    <lineage>
        <taxon>Eukaryota</taxon>
        <taxon>Metazoa</taxon>
        <taxon>Chordata</taxon>
        <taxon>Craniata</taxon>
        <taxon>Vertebrata</taxon>
        <taxon>Euteleostomi</taxon>
        <taxon>Mammalia</taxon>
        <taxon>Eutheria</taxon>
        <taxon>Laurasiatheria</taxon>
        <taxon>Carnivora</taxon>
        <taxon>Caniformia</taxon>
        <taxon>Canidae</taxon>
        <taxon>Canis</taxon>
    </lineage>
</organism>
<gene>
    <name type="primary">FUT8</name>
</gene>
<feature type="chain" id="PRO_0000357040" description="Alpha-(1,6)-fucosyltransferase">
    <location>
        <begin position="1"/>
        <end position="575"/>
    </location>
</feature>
<feature type="topological domain" description="Cytoplasmic" evidence="4">
    <location>
        <begin position="1"/>
        <end position="9"/>
    </location>
</feature>
<feature type="transmembrane region" description="Helical; Signal-anchor for type II membrane protein" evidence="4">
    <location>
        <begin position="10"/>
        <end position="30"/>
    </location>
</feature>
<feature type="topological domain" description="Lumenal" evidence="4">
    <location>
        <begin position="31"/>
        <end position="575"/>
    </location>
</feature>
<feature type="domain" description="GT23" evidence="6">
    <location>
        <begin position="206"/>
        <end position="493"/>
    </location>
</feature>
<feature type="domain" description="SH3" evidence="5">
    <location>
        <begin position="502"/>
        <end position="563"/>
    </location>
</feature>
<feature type="region of interest" description="Important for donor substrate binding" evidence="6">
    <location>
        <begin position="365"/>
        <end position="366"/>
    </location>
</feature>
<feature type="short sequence motif" description="SH3-binding" evidence="4">
    <location>
        <begin position="299"/>
        <end position="305"/>
    </location>
</feature>
<feature type="modified residue" description="Phosphoserine" evidence="3">
    <location>
        <position position="278"/>
    </location>
</feature>
<feature type="disulfide bond" evidence="1">
    <location>
        <begin position="204"/>
        <end position="266"/>
    </location>
</feature>
<feature type="disulfide bond" evidence="1">
    <location>
        <begin position="212"/>
        <end position="230"/>
    </location>
</feature>
<feature type="disulfide bond" evidence="1">
    <location>
        <begin position="218"/>
        <end position="222"/>
    </location>
</feature>
<feature type="disulfide bond" evidence="1">
    <location>
        <begin position="465"/>
        <end position="472"/>
    </location>
</feature>
<sequence length="575" mass="66452">MRPWTGSWRWIMLILFAWGTLLFYIGGHLVRDNDHPDHSSRELSKILAKLERLKQQNEDLRRMAESLRIPEGPIDQAPASGRVRALEEQLLKAKEQIENYKKQTRNGLGKDHEILRRRIENGAKELWFFLQSELKKLKNLEGNVLQRHADEFLSDLGHHERSIMTDLYYLSQTDGAGDWREKEAKDLTELVQRRITYLQNPKDCSKAKKLVCNINKGCGYGCQLHHVVYCFMIAYGTQRTLILESQNWRYATGGWETVFRPVNETCTDRSGTSTGHWSGEVKDKNVQVVELPIVDSLHPRPPYLPLAVPEDLADRLVRVHGDPAVWWVSQFVKYLIRPQPWLEKEIEEATKKLGFNIPVIGVHVRRTDKVGTEAAFHPIEEYMVHVEEHFQLLARRMQVDKRRVYLATDDPSLLKEAKTKYPTYEFISDNSISWSAGLHNRYTENSLRGVILDIHFLSQADFLVCTFSSQVCRVAYEIMQTLHPDASANFHSLDDIYYFGGQNAHNQIAIYPHQPRTADEIPMEPGDIIGVAGNHWDGYSKGVNRKLGRTGLYPSYKVREKIETVKYPTYPEAEK</sequence>
<dbReference type="EC" id="2.4.1.68"/>
<dbReference type="EMBL" id="AJ830717">
    <property type="protein sequence ID" value="CAH25852.1"/>
    <property type="molecule type" value="mRNA"/>
</dbReference>
<dbReference type="SMR" id="Q659X0"/>
<dbReference type="FunCoup" id="Q659X0">
    <property type="interactions" value="460"/>
</dbReference>
<dbReference type="STRING" id="9615.ENSCAFP00000023924"/>
<dbReference type="CAZy" id="GT23">
    <property type="family name" value="Glycosyltransferase Family 23"/>
</dbReference>
<dbReference type="PaxDb" id="9612-ENSCAFP00000023924"/>
<dbReference type="eggNOG" id="KOG3705">
    <property type="taxonomic scope" value="Eukaryota"/>
</dbReference>
<dbReference type="InParanoid" id="Q659X0"/>
<dbReference type="OrthoDB" id="2014825at2759"/>
<dbReference type="UniPathway" id="UPA00378"/>
<dbReference type="Proteomes" id="UP000002254">
    <property type="component" value="Unplaced"/>
</dbReference>
<dbReference type="Proteomes" id="UP000694429">
    <property type="component" value="Unplaced"/>
</dbReference>
<dbReference type="Proteomes" id="UP000694542">
    <property type="component" value="Unplaced"/>
</dbReference>
<dbReference type="Proteomes" id="UP000805418">
    <property type="component" value="Unplaced"/>
</dbReference>
<dbReference type="GO" id="GO:0032580">
    <property type="term" value="C:Golgi cisterna membrane"/>
    <property type="evidence" value="ECO:0007669"/>
    <property type="project" value="UniProtKB-SubCell"/>
</dbReference>
<dbReference type="GO" id="GO:0046921">
    <property type="term" value="F:alpha-(1-&gt;6)-fucosyltransferase activity"/>
    <property type="evidence" value="ECO:0000318"/>
    <property type="project" value="GO_Central"/>
</dbReference>
<dbReference type="GO" id="GO:0008424">
    <property type="term" value="F:glycoprotein 6-alpha-L-fucosyltransferase activity"/>
    <property type="evidence" value="ECO:0000250"/>
    <property type="project" value="UniProtKB"/>
</dbReference>
<dbReference type="GO" id="GO:0017124">
    <property type="term" value="F:SH3 domain binding"/>
    <property type="evidence" value="ECO:0007669"/>
    <property type="project" value="UniProtKB-KW"/>
</dbReference>
<dbReference type="GO" id="GO:0046368">
    <property type="term" value="P:GDP-L-fucose metabolic process"/>
    <property type="evidence" value="ECO:0000250"/>
    <property type="project" value="UniProtKB"/>
</dbReference>
<dbReference type="GO" id="GO:0036071">
    <property type="term" value="P:N-glycan fucosylation"/>
    <property type="evidence" value="ECO:0000318"/>
    <property type="project" value="GO_Central"/>
</dbReference>
<dbReference type="GO" id="GO:0006487">
    <property type="term" value="P:protein N-linked glycosylation"/>
    <property type="evidence" value="ECO:0000318"/>
    <property type="project" value="GO_Central"/>
</dbReference>
<dbReference type="GO" id="GO:0018279">
    <property type="term" value="P:protein N-linked glycosylation via asparagine"/>
    <property type="evidence" value="ECO:0000250"/>
    <property type="project" value="UniProtKB"/>
</dbReference>
<dbReference type="CDD" id="cd11300">
    <property type="entry name" value="Fut8_like"/>
    <property type="match status" value="1"/>
</dbReference>
<dbReference type="CDD" id="cd11792">
    <property type="entry name" value="SH3_Fut8"/>
    <property type="match status" value="1"/>
</dbReference>
<dbReference type="FunFam" id="1.10.287.1060:FF:000003">
    <property type="entry name" value="Alpha-(1,6)-fucosyltransferase"/>
    <property type="match status" value="1"/>
</dbReference>
<dbReference type="FunFam" id="2.30.30.40:FF:000070">
    <property type="entry name" value="Alpha-(1,6)-fucosyltransferase"/>
    <property type="match status" value="1"/>
</dbReference>
<dbReference type="FunFam" id="3.40.50.11350:FF:000001">
    <property type="entry name" value="Alpha-(1,6)-fucosyltransferase"/>
    <property type="match status" value="1"/>
</dbReference>
<dbReference type="Gene3D" id="3.40.50.11350">
    <property type="match status" value="1"/>
</dbReference>
<dbReference type="Gene3D" id="1.10.287.1060">
    <property type="entry name" value="ESAT-6-like"/>
    <property type="match status" value="1"/>
</dbReference>
<dbReference type="Gene3D" id="2.30.30.40">
    <property type="entry name" value="SH3 Domains"/>
    <property type="match status" value="1"/>
</dbReference>
<dbReference type="InterPro" id="IPR015827">
    <property type="entry name" value="Fut8"/>
</dbReference>
<dbReference type="InterPro" id="IPR045573">
    <property type="entry name" value="Fut8_N_cat"/>
</dbReference>
<dbReference type="InterPro" id="IPR035653">
    <property type="entry name" value="Fut8_SH3"/>
</dbReference>
<dbReference type="InterPro" id="IPR027350">
    <property type="entry name" value="GT23_dom"/>
</dbReference>
<dbReference type="InterPro" id="IPR036028">
    <property type="entry name" value="SH3-like_dom_sf"/>
</dbReference>
<dbReference type="InterPro" id="IPR001452">
    <property type="entry name" value="SH3_domain"/>
</dbReference>
<dbReference type="PANTHER" id="PTHR13132">
    <property type="entry name" value="ALPHA- 1,6 -FUCOSYLTRANSFERASE"/>
    <property type="match status" value="1"/>
</dbReference>
<dbReference type="PANTHER" id="PTHR13132:SF29">
    <property type="entry name" value="ALPHA-(1,6)-FUCOSYLTRANSFERASE"/>
    <property type="match status" value="1"/>
</dbReference>
<dbReference type="Pfam" id="PF19745">
    <property type="entry name" value="FUT8_N_cat"/>
    <property type="match status" value="1"/>
</dbReference>
<dbReference type="Pfam" id="PF14604">
    <property type="entry name" value="SH3_9"/>
    <property type="match status" value="1"/>
</dbReference>
<dbReference type="PIRSF" id="PIRSF000472">
    <property type="entry name" value="Alpha1_6FUT_euk"/>
    <property type="match status" value="1"/>
</dbReference>
<dbReference type="SMART" id="SM00326">
    <property type="entry name" value="SH3"/>
    <property type="match status" value="1"/>
</dbReference>
<dbReference type="SUPFAM" id="SSF50044">
    <property type="entry name" value="SH3-domain"/>
    <property type="match status" value="1"/>
</dbReference>
<dbReference type="PROSITE" id="PS51659">
    <property type="entry name" value="GT23"/>
    <property type="match status" value="1"/>
</dbReference>
<dbReference type="PROSITE" id="PS50002">
    <property type="entry name" value="SH3"/>
    <property type="match status" value="1"/>
</dbReference>
<protein>
    <recommendedName>
        <fullName>Alpha-(1,6)-fucosyltransferase</fullName>
        <shortName>Alpha1-6FucT</shortName>
        <ecNumber>2.4.1.68</ecNumber>
    </recommendedName>
    <alternativeName>
        <fullName>Fucosyltransferase 8</fullName>
    </alternativeName>
    <alternativeName>
        <fullName>GDP-L-Fuc:N-acetyl-beta-D-glucosaminide alpha1,6-fucosyltransferase</fullName>
    </alternativeName>
    <alternativeName>
        <fullName>GDP-fucose--glycoprotein fucosyltransferase</fullName>
    </alternativeName>
    <alternativeName>
        <fullName>Glycoprotein 6-alpha-L-fucosyltransferase</fullName>
    </alternativeName>
</protein>
<keyword id="KW-1015">Disulfide bond</keyword>
<keyword id="KW-0328">Glycosyltransferase</keyword>
<keyword id="KW-0333">Golgi apparatus</keyword>
<keyword id="KW-0472">Membrane</keyword>
<keyword id="KW-0597">Phosphoprotein</keyword>
<keyword id="KW-1185">Reference proteome</keyword>
<keyword id="KW-0728">SH3 domain</keyword>
<keyword id="KW-0729">SH3-binding</keyword>
<keyword id="KW-0735">Signal-anchor</keyword>
<keyword id="KW-0808">Transferase</keyword>
<keyword id="KW-0812">Transmembrane</keyword>
<keyword id="KW-1133">Transmembrane helix</keyword>
<evidence type="ECO:0000250" key="1"/>
<evidence type="ECO:0000250" key="2">
    <source>
        <dbReference type="UniProtKB" id="Q9BYC5"/>
    </source>
</evidence>
<evidence type="ECO:0000250" key="3">
    <source>
        <dbReference type="UniProtKB" id="Q9WTS2"/>
    </source>
</evidence>
<evidence type="ECO:0000255" key="4"/>
<evidence type="ECO:0000255" key="5">
    <source>
        <dbReference type="PROSITE-ProRule" id="PRU00192"/>
    </source>
</evidence>
<evidence type="ECO:0000255" key="6">
    <source>
        <dbReference type="PROSITE-ProRule" id="PRU00992"/>
    </source>
</evidence>
<accession>Q659X0</accession>
<proteinExistence type="evidence at transcript level"/>
<reference key="1">
    <citation type="submission" date="2004-09" db="EMBL/GenBank/DDBJ databases">
        <title>Phylogeny of fucosyltransferases.</title>
        <authorList>
            <person name="Martinez-Duncker I."/>
            <person name="Oriol R."/>
            <person name="Mollicone R."/>
        </authorList>
    </citation>
    <scope>NUCLEOTIDE SEQUENCE [MRNA]</scope>
</reference>
<comment type="function">
    <text evidence="1">Catalyzes the addition of fucose in alpha 1-6 linkage to the first GlcNAc residue, next to the peptide chains in N-glycans.</text>
</comment>
<comment type="catalytic activity">
    <reaction>
        <text>N(4)-{beta-D-GlcNAc-(1-&gt;2)-alpha-D-Man-(1-&gt;3)-[beta-D-GlcNAc-(1-&gt;2)-alpha-D-Man-(1-&gt;6)]-beta-D-Man-(1-&gt;4)-beta-D-GlcNAc-(1-&gt;4)-beta-D-GlcNAc}-L-asparaginyl-[protein] + GDP-beta-L-fucose = an N(4)-{beta-D-GlcNAc-(1-&gt;2)-alpha-D-Man-(1-&gt;3)-[beta-D-GlcNAc-(1-&gt;2)-alpha-D-Man-(1-&gt;6)]-beta-D-Man-(1-&gt;4)-beta-D-GlcNAc-(1-&gt;4)-[alpha-L-Fuc-(1-&gt;6)]-beta-D-GlcNAc}-L-asparaginyl-[protein] + GDP + H(+)</text>
        <dbReference type="Rhea" id="RHEA:12985"/>
        <dbReference type="Rhea" id="RHEA-COMP:13526"/>
        <dbReference type="Rhea" id="RHEA-COMP:13532"/>
        <dbReference type="ChEBI" id="CHEBI:15378"/>
        <dbReference type="ChEBI" id="CHEBI:57273"/>
        <dbReference type="ChEBI" id="CHEBI:58189"/>
        <dbReference type="ChEBI" id="CHEBI:60651"/>
        <dbReference type="ChEBI" id="CHEBI:137207"/>
        <dbReference type="EC" id="2.4.1.68"/>
    </reaction>
</comment>
<comment type="pathway">
    <text>Protein modification; protein glycosylation.</text>
</comment>
<comment type="subcellular location">
    <subcellularLocation>
        <location evidence="1">Golgi apparatus</location>
        <location evidence="1">Golgi stack membrane</location>
        <topology evidence="1">Single-pass type II membrane protein</topology>
    </subcellularLocation>
    <text evidence="1">Membrane-bound form in trans cisternae of Golgi.</text>
</comment>
<comment type="PTM">
    <text evidence="2">Tyrosine phosphorylated by PKDCC/VLK.</text>
</comment>
<comment type="similarity">
    <text evidence="6">Belongs to the glycosyltransferase 23 family.</text>
</comment>
<name>FUT8_CANLF</name>